<proteinExistence type="inferred from homology"/>
<protein>
    <recommendedName>
        <fullName evidence="2">Large ribosomal subunit protein bL31</fullName>
    </recommendedName>
    <alternativeName>
        <fullName>50S ribosomal protein L31</fullName>
    </alternativeName>
</protein>
<evidence type="ECO:0000250" key="1"/>
<evidence type="ECO:0000305" key="2"/>
<comment type="function">
    <text evidence="1">Binds the 23S rRNA.</text>
</comment>
<comment type="subunit">
    <text evidence="1">Part of the 50S ribosomal subunit.</text>
</comment>
<comment type="similarity">
    <text evidence="2">Belongs to the bacterial ribosomal protein bL31 family. Type A subfamily.</text>
</comment>
<accession>Q92JD0</accession>
<dbReference type="EMBL" id="AE006914">
    <property type="protein sequence ID" value="AAL02675.1"/>
    <property type="molecule type" value="Genomic_DNA"/>
</dbReference>
<dbReference type="PIR" id="A97717">
    <property type="entry name" value="A97717"/>
</dbReference>
<dbReference type="RefSeq" id="WP_010976814.1">
    <property type="nucleotide sequence ID" value="NC_003103.1"/>
</dbReference>
<dbReference type="GeneID" id="928058"/>
<dbReference type="KEGG" id="rco:RC0137"/>
<dbReference type="PATRIC" id="fig|272944.4.peg.160"/>
<dbReference type="HOGENOM" id="CLU_114306_3_1_5"/>
<dbReference type="Proteomes" id="UP000000816">
    <property type="component" value="Chromosome"/>
</dbReference>
<dbReference type="GO" id="GO:1990904">
    <property type="term" value="C:ribonucleoprotein complex"/>
    <property type="evidence" value="ECO:0007669"/>
    <property type="project" value="UniProtKB-KW"/>
</dbReference>
<dbReference type="GO" id="GO:0005840">
    <property type="term" value="C:ribosome"/>
    <property type="evidence" value="ECO:0007669"/>
    <property type="project" value="UniProtKB-KW"/>
</dbReference>
<dbReference type="GO" id="GO:0019843">
    <property type="term" value="F:rRNA binding"/>
    <property type="evidence" value="ECO:0007669"/>
    <property type="project" value="UniProtKB-KW"/>
</dbReference>
<dbReference type="GO" id="GO:0003735">
    <property type="term" value="F:structural constituent of ribosome"/>
    <property type="evidence" value="ECO:0007669"/>
    <property type="project" value="InterPro"/>
</dbReference>
<dbReference type="GO" id="GO:0006412">
    <property type="term" value="P:translation"/>
    <property type="evidence" value="ECO:0007669"/>
    <property type="project" value="InterPro"/>
</dbReference>
<dbReference type="Gene3D" id="4.10.830.30">
    <property type="entry name" value="Ribosomal protein L31"/>
    <property type="match status" value="1"/>
</dbReference>
<dbReference type="InterPro" id="IPR034704">
    <property type="entry name" value="Ribosomal_bL28/bL31-like_sf"/>
</dbReference>
<dbReference type="InterPro" id="IPR002150">
    <property type="entry name" value="Ribosomal_bL31"/>
</dbReference>
<dbReference type="InterPro" id="IPR042105">
    <property type="entry name" value="Ribosomal_bL31_sf"/>
</dbReference>
<dbReference type="NCBIfam" id="TIGR00105">
    <property type="entry name" value="L31"/>
    <property type="match status" value="1"/>
</dbReference>
<dbReference type="Pfam" id="PF01197">
    <property type="entry name" value="Ribosomal_L31"/>
    <property type="match status" value="1"/>
</dbReference>
<dbReference type="SUPFAM" id="SSF143800">
    <property type="entry name" value="L28p-like"/>
    <property type="match status" value="1"/>
</dbReference>
<dbReference type="PROSITE" id="PS01143">
    <property type="entry name" value="RIBOSOMAL_L31"/>
    <property type="match status" value="1"/>
</dbReference>
<name>RL31_RICCN</name>
<gene>
    <name type="primary">rpmE</name>
    <name type="ordered locus">RC0137</name>
</gene>
<feature type="chain" id="PRO_0000173154" description="Large ribosomal subunit protein bL31">
    <location>
        <begin position="1"/>
        <end position="78"/>
    </location>
</feature>
<organism>
    <name type="scientific">Rickettsia conorii (strain ATCC VR-613 / Malish 7)</name>
    <dbReference type="NCBI Taxonomy" id="272944"/>
    <lineage>
        <taxon>Bacteria</taxon>
        <taxon>Pseudomonadati</taxon>
        <taxon>Pseudomonadota</taxon>
        <taxon>Alphaproteobacteria</taxon>
        <taxon>Rickettsiales</taxon>
        <taxon>Rickettsiaceae</taxon>
        <taxon>Rickettsieae</taxon>
        <taxon>Rickettsia</taxon>
        <taxon>spotted fever group</taxon>
    </lineage>
</organism>
<keyword id="KW-0687">Ribonucleoprotein</keyword>
<keyword id="KW-0689">Ribosomal protein</keyword>
<keyword id="KW-0694">RNA-binding</keyword>
<keyword id="KW-0699">rRNA-binding</keyword>
<reference key="1">
    <citation type="journal article" date="2001" name="Science">
        <title>Mechanisms of evolution in Rickettsia conorii and R. prowazekii.</title>
        <authorList>
            <person name="Ogata H."/>
            <person name="Audic S."/>
            <person name="Renesto-Audiffren P."/>
            <person name="Fournier P.-E."/>
            <person name="Barbe V."/>
            <person name="Samson D."/>
            <person name="Roux V."/>
            <person name="Cossart P."/>
            <person name="Weissenbach J."/>
            <person name="Claverie J.-M."/>
            <person name="Raoult D."/>
        </authorList>
    </citation>
    <scope>NUCLEOTIDE SEQUENCE [LARGE SCALE GENOMIC DNA]</scope>
    <source>
        <strain>ATCC VR-613 / Malish 7</strain>
    </source>
</reference>
<sequence length="78" mass="8781">MKSSIHPEYKKFLIKVGSDVFETMSTHPTGEILMDVDFRKHPAWNKDSGNVVNQSNKSVSDFNKRFSGLSFGSKKEAS</sequence>